<feature type="peptide" id="PRO_0000250576" description="Dermaseptin-H6" evidence="3">
    <location>
        <begin position="1"/>
        <end position="29"/>
    </location>
</feature>
<feature type="modified residue" description="Leucine amide" evidence="3">
    <location>
        <position position="29"/>
    </location>
</feature>
<sequence>GLWSTIKQKGKEAAIAAAKAAGQAALGAL</sequence>
<dbReference type="SMR" id="P84936"/>
<dbReference type="GO" id="GO:0005576">
    <property type="term" value="C:extracellular region"/>
    <property type="evidence" value="ECO:0007669"/>
    <property type="project" value="UniProtKB-SubCell"/>
</dbReference>
<dbReference type="GO" id="GO:0042742">
    <property type="term" value="P:defense response to bacterium"/>
    <property type="evidence" value="ECO:0007669"/>
    <property type="project" value="UniProtKB-KW"/>
</dbReference>
<comment type="function">
    <text evidence="1">Possesses a potent antimicrobial activity against Gram-positive and Gram-negative bacteria. Probably acts by disturbing membrane functions with its amphipathic structure (By similarity).</text>
</comment>
<comment type="subcellular location">
    <subcellularLocation>
        <location evidence="3">Secreted</location>
    </subcellularLocation>
</comment>
<comment type="tissue specificity">
    <text evidence="3">Expressed by the skin glands.</text>
</comment>
<comment type="mass spectrometry"/>
<comment type="similarity">
    <text evidence="2">Belongs to the frog skin active peptide (FSAP) family. Dermaseptin subfamily.</text>
</comment>
<name>DMS6_PITAZ</name>
<proteinExistence type="evidence at protein level"/>
<reference evidence="5" key="1">
    <citation type="journal article" date="2007" name="Peptides">
        <title>A combined mass spectrometric and cDNA sequencing approach to the isolation and characterization of novel antimicrobial peptides from the skin secretions of Phyllomedusa hypochondrialis azurea.</title>
        <authorList>
            <person name="Thompson A.H."/>
            <person name="Bjourson A.J."/>
            <person name="Orr D.F."/>
            <person name="Shaw C."/>
            <person name="McClean S."/>
        </authorList>
    </citation>
    <scope>PROTEIN SEQUENCE</scope>
    <scope>SUBCELLULAR LOCATION</scope>
    <scope>TISSUE SPECIFICITY</scope>
    <scope>MASS SPECTROMETRY</scope>
    <scope>AMIDATION AT LEU-29</scope>
    <source>
        <tissue evidence="3">Skin secretion</tissue>
    </source>
</reference>
<organism>
    <name type="scientific">Pithecopus azureus</name>
    <name type="common">Orange-legged monkey tree frog</name>
    <name type="synonym">Phyllomedusa azurea</name>
    <dbReference type="NCBI Taxonomy" id="2034991"/>
    <lineage>
        <taxon>Eukaryota</taxon>
        <taxon>Metazoa</taxon>
        <taxon>Chordata</taxon>
        <taxon>Craniata</taxon>
        <taxon>Vertebrata</taxon>
        <taxon>Euteleostomi</taxon>
        <taxon>Amphibia</taxon>
        <taxon>Batrachia</taxon>
        <taxon>Anura</taxon>
        <taxon>Neobatrachia</taxon>
        <taxon>Hyloidea</taxon>
        <taxon>Hylidae</taxon>
        <taxon>Phyllomedusinae</taxon>
        <taxon>Pithecopus</taxon>
    </lineage>
</organism>
<keyword id="KW-0027">Amidation</keyword>
<keyword id="KW-0878">Amphibian defense peptide</keyword>
<keyword id="KW-0044">Antibiotic</keyword>
<keyword id="KW-0929">Antimicrobial</keyword>
<keyword id="KW-0903">Direct protein sequencing</keyword>
<keyword id="KW-0964">Secreted</keyword>
<protein>
    <recommendedName>
        <fullName evidence="4">Dermaseptin-H6</fullName>
    </recommendedName>
    <alternativeName>
        <fullName>Dermaseptin-H1</fullName>
    </alternativeName>
    <alternativeName>
        <fullName>Dermaseptin-like peptide 1</fullName>
        <shortName>DMS1</shortName>
    </alternativeName>
    <alternativeName>
        <fullName evidence="4">Dermaseptin-like peptide 6</fullName>
        <shortName evidence="4">DMS6</shortName>
    </alternativeName>
</protein>
<evidence type="ECO:0000250" key="1">
    <source>
        <dbReference type="UniProtKB" id="P80281"/>
    </source>
</evidence>
<evidence type="ECO:0000255" key="2"/>
<evidence type="ECO:0000269" key="3">
    <source>
    </source>
</evidence>
<evidence type="ECO:0000303" key="4">
    <source>
    </source>
</evidence>
<evidence type="ECO:0000305" key="5"/>
<accession>P84936</accession>